<proteinExistence type="inferred from homology"/>
<gene>
    <name type="ordered locus">Pput_2459</name>
</gene>
<name>PHK_PSEP1</name>
<sequence>MSDFPGTEELESLDAYWRAANYLTVGQIYLQGNALLTRPLTLADVKPRLLGHWGTSPGLNLVYTHLNRLIHQYSLNVLFVTGPGHGGPALVAQAYLDGTYTELNPSVERNALGMARLFRQFSWPYGIGSHVGPHVPGSIHEGGELGYSLAHAYGAALDNPQLIVACVIGDGEAETGPLAASWHCNKFLNPARDGAVLPILHLNGYKIANPSVLSMISEEELTSLMYGYGYDPYFVEGDEPMEVHRALARTLDVIYEKISQIQRLARYAEDPQVVDRPLWPVLILRTPKGWTGPRYVDGQRVEGTWRSHQLPLADLDKPPHLMQLQQWLESYRPHELFDAQGTLLPELAALTPTGRRRMSANPHANGGLLLRALDLPHYADYCVPMPGPGQVRAEATRVLGGYVRDVMKNSLASQNFRLFGPDETASNRLDAVFEVTDKVWLDARASDDRHLSAQGRVMEILSEHICEGWLEGYLLTGRHGLFSCYEAFIHIVDSMINQHAKWLKTAAEVPWRKPIASLNILLTSHVWRQDHNGFSHQDPGLLDLLANKKANLARIYLPPDANCLLSVAEHCLRSRGYINVIVAGKQMEWQWLDCEAAAVHCQSGIGRWGWACHDDEMPEVVLACAGDVPTLEVLAAVTLLQEQAPDVRVRVVNVVDLMALQLSQQHPHGLSDSDFNGLFTEDRPVIFAFHGYPALIHRLIYKRANPQRFHVRGFREEGATTTPFDMAVINNLDRYQLLLDVFERVPRLQPQLEQARARYWATMEKHKLYLIEHGEDMPEVAQWRWTSASRA</sequence>
<protein>
    <recommendedName>
        <fullName evidence="1">Probable phosphoketolase</fullName>
        <ecNumber evidence="1">4.1.2.-</ecNumber>
    </recommendedName>
</protein>
<feature type="chain" id="PRO_1000145455" description="Probable phosphoketolase">
    <location>
        <begin position="1"/>
        <end position="791"/>
    </location>
</feature>
<reference key="1">
    <citation type="submission" date="2007-05" db="EMBL/GenBank/DDBJ databases">
        <title>Complete sequence of Pseudomonas putida F1.</title>
        <authorList>
            <consortium name="US DOE Joint Genome Institute"/>
            <person name="Copeland A."/>
            <person name="Lucas S."/>
            <person name="Lapidus A."/>
            <person name="Barry K."/>
            <person name="Detter J.C."/>
            <person name="Glavina del Rio T."/>
            <person name="Hammon N."/>
            <person name="Israni S."/>
            <person name="Dalin E."/>
            <person name="Tice H."/>
            <person name="Pitluck S."/>
            <person name="Chain P."/>
            <person name="Malfatti S."/>
            <person name="Shin M."/>
            <person name="Vergez L."/>
            <person name="Schmutz J."/>
            <person name="Larimer F."/>
            <person name="Land M."/>
            <person name="Hauser L."/>
            <person name="Kyrpides N."/>
            <person name="Lykidis A."/>
            <person name="Parales R."/>
            <person name="Richardson P."/>
        </authorList>
    </citation>
    <scope>NUCLEOTIDE SEQUENCE [LARGE SCALE GENOMIC DNA]</scope>
    <source>
        <strain>ATCC 700007 / DSM 6899 / JCM 31910 / BCRC 17059 / LMG 24140 / F1</strain>
    </source>
</reference>
<dbReference type="EC" id="4.1.2.-" evidence="1"/>
<dbReference type="EMBL" id="CP000712">
    <property type="protein sequence ID" value="ABQ78594.1"/>
    <property type="molecule type" value="Genomic_DNA"/>
</dbReference>
<dbReference type="SMR" id="A5W384"/>
<dbReference type="KEGG" id="ppf:Pput_2459"/>
<dbReference type="eggNOG" id="COG3957">
    <property type="taxonomic scope" value="Bacteria"/>
</dbReference>
<dbReference type="HOGENOM" id="CLU_013954_2_0_6"/>
<dbReference type="GO" id="GO:0016832">
    <property type="term" value="F:aldehyde-lyase activity"/>
    <property type="evidence" value="ECO:0007669"/>
    <property type="project" value="UniProtKB-UniRule"/>
</dbReference>
<dbReference type="GO" id="GO:0005975">
    <property type="term" value="P:carbohydrate metabolic process"/>
    <property type="evidence" value="ECO:0007669"/>
    <property type="project" value="InterPro"/>
</dbReference>
<dbReference type="FunFam" id="3.40.50.970:FF:000091">
    <property type="entry name" value="Xylulose-5-phosphate/fructose-6-phosphate phosphoketolase"/>
    <property type="match status" value="1"/>
</dbReference>
<dbReference type="Gene3D" id="3.40.50.920">
    <property type="match status" value="1"/>
</dbReference>
<dbReference type="Gene3D" id="3.40.50.970">
    <property type="match status" value="2"/>
</dbReference>
<dbReference type="HAMAP" id="MF_01403">
    <property type="entry name" value="Phosphoketolase"/>
    <property type="match status" value="1"/>
</dbReference>
<dbReference type="InterPro" id="IPR023962">
    <property type="entry name" value="Phosphoketolase"/>
</dbReference>
<dbReference type="InterPro" id="IPR029061">
    <property type="entry name" value="THDP-binding"/>
</dbReference>
<dbReference type="InterPro" id="IPR009014">
    <property type="entry name" value="Transketo_C/PFOR_II"/>
</dbReference>
<dbReference type="InterPro" id="IPR005593">
    <property type="entry name" value="Xul5P/Fru6P_PKetolase"/>
</dbReference>
<dbReference type="InterPro" id="IPR018969">
    <property type="entry name" value="Xul5P/Fru6P_PKetolase_C"/>
</dbReference>
<dbReference type="InterPro" id="IPR019790">
    <property type="entry name" value="Xul5P/Fru6P_PKetolase_CS"/>
</dbReference>
<dbReference type="InterPro" id="IPR018970">
    <property type="entry name" value="Xul5P/Fru6P_PKetolase_N"/>
</dbReference>
<dbReference type="InterPro" id="IPR019789">
    <property type="entry name" value="Xul5P/Fru6P_PKetolase_ThDP_BS"/>
</dbReference>
<dbReference type="NCBIfam" id="NF003617">
    <property type="entry name" value="PRK05261.1-2"/>
    <property type="match status" value="1"/>
</dbReference>
<dbReference type="NCBIfam" id="NF003619">
    <property type="entry name" value="PRK05261.1-4"/>
    <property type="match status" value="1"/>
</dbReference>
<dbReference type="NCBIfam" id="NF003621">
    <property type="entry name" value="PRK05261.1-6"/>
    <property type="match status" value="1"/>
</dbReference>
<dbReference type="PANTHER" id="PTHR31273">
    <property type="entry name" value="PHOSPHOKETOLASE-RELATED"/>
    <property type="match status" value="1"/>
</dbReference>
<dbReference type="PANTHER" id="PTHR31273:SF0">
    <property type="entry name" value="PHOSPHOKETOLASE-RELATED"/>
    <property type="match status" value="1"/>
</dbReference>
<dbReference type="Pfam" id="PF03894">
    <property type="entry name" value="XFP"/>
    <property type="match status" value="1"/>
</dbReference>
<dbReference type="Pfam" id="PF09363">
    <property type="entry name" value="XFP_C"/>
    <property type="match status" value="1"/>
</dbReference>
<dbReference type="Pfam" id="PF09364">
    <property type="entry name" value="XFP_N"/>
    <property type="match status" value="1"/>
</dbReference>
<dbReference type="PIRSF" id="PIRSF017245">
    <property type="entry name" value="Phosphoketolase"/>
    <property type="match status" value="1"/>
</dbReference>
<dbReference type="SUPFAM" id="SSF52518">
    <property type="entry name" value="Thiamin diphosphate-binding fold (THDP-binding)"/>
    <property type="match status" value="2"/>
</dbReference>
<dbReference type="SUPFAM" id="SSF52922">
    <property type="entry name" value="TK C-terminal domain-like"/>
    <property type="match status" value="1"/>
</dbReference>
<dbReference type="PROSITE" id="PS60002">
    <property type="entry name" value="PHOSPHOKETOLASE_1"/>
    <property type="match status" value="1"/>
</dbReference>
<dbReference type="PROSITE" id="PS60003">
    <property type="entry name" value="PHOSPHOKETOLASE_2"/>
    <property type="match status" value="1"/>
</dbReference>
<evidence type="ECO:0000255" key="1">
    <source>
        <dbReference type="HAMAP-Rule" id="MF_01403"/>
    </source>
</evidence>
<organism>
    <name type="scientific">Pseudomonas putida (strain ATCC 700007 / DSM 6899 / JCM 31910 / BCRC 17059 / LMG 24140 / F1)</name>
    <dbReference type="NCBI Taxonomy" id="351746"/>
    <lineage>
        <taxon>Bacteria</taxon>
        <taxon>Pseudomonadati</taxon>
        <taxon>Pseudomonadota</taxon>
        <taxon>Gammaproteobacteria</taxon>
        <taxon>Pseudomonadales</taxon>
        <taxon>Pseudomonadaceae</taxon>
        <taxon>Pseudomonas</taxon>
    </lineage>
</organism>
<accession>A5W384</accession>
<keyword id="KW-0456">Lyase</keyword>
<keyword id="KW-0786">Thiamine pyrophosphate</keyword>
<comment type="cofactor">
    <cofactor evidence="1">
        <name>thiamine diphosphate</name>
        <dbReference type="ChEBI" id="CHEBI:58937"/>
    </cofactor>
</comment>
<comment type="similarity">
    <text evidence="1">Belongs to the XFP family.</text>
</comment>